<organismHost>
    <name type="scientific">Escherichia coli O157:H7</name>
    <dbReference type="NCBI Taxonomy" id="83334"/>
</organismHost>
<comment type="function">
    <molecule>Mature tail fiber protein Gp37</molecule>
    <text evidence="1">Constitues the trimeric tip of the long tail fiber that mediates the attachment to the host receptor, together with the receptor-recognizing protein Gp38.</text>
</comment>
<comment type="function">
    <molecule>Intramolecular chaperone</molecule>
    <text evidence="3">The C-terminal chaperone protein mediates homotrimerization and proper folding of the catalytic trimer.</text>
</comment>
<comment type="subunit">
    <text evidence="1">Homotrimer. Interacts with the receptor-recognizing protein Gp38.</text>
</comment>
<comment type="subcellular location">
    <subcellularLocation>
        <location evidence="1">Virion</location>
    </subcellularLocation>
</comment>
<comment type="PTM">
    <text evidence="1">Proteolytic cleavage and release of the chaperone in the host cytosol stabilizes the folded protein.</text>
</comment>
<comment type="similarity">
    <text evidence="5">Belongs to the S16-like long tail fiber protein Gp37 family.</text>
</comment>
<sequence length="1103" mass="119177">MATLKQIQFKRSKTAGQRPAASVLAEGELAINLKDRVLFTKDDQGNIIDLGFAKGGSIDGNVIHKGNYNQTGDYTLNGTFTQTGNFNLTGIARVTRDIIAAGQIMTEGGELITKSSGTAHVRFHDSADRERGIIFSPANDGLTTQVVNIRVRDYKASSESTFAFNGNGLFSSPEVFGWKSVSTPVIYTNKVITNKKVKDDYDIYSMADNVPLSEITTAINHLRVMRNAVGSGIFHEVKDNDGITWYSGDGLDAYLWSFTWSGGIKSSHSISIGLTPGPKDYSILGPSSIALGDNDTGFKWHQDGYYFSVNNGTKTFLFSPSETTSLRKFVAGYSTNGTDLTTPPTENYALATVVTYHDNNAFGDGQTLLGYYQGGNYHHYFRGKGTTNINTHGGLLVTPGIIDVIGGSVNIDGRNNASTAMFKGNTTGSSSVDNMTISVWGNTFTNPSEGNRKNVMEISDATSWMSYIQRLTTGEVEMNVNGSFESSGVTAGNRGVHTTGEISSGAVNALRIWNADYGVIFRRSEGSLHIIPTAYGEGKNGDIGPLRPFSIALDTGKVVIPDLESSYNTFAANGYIKFAGHGAGAGGYDIQYSQAAPIFQEIDDAAVSKYYPIVKQKFLNGKAVWSLGTEINSGTFVLHHLKEDGSQGHTSRFNADGTVNFPDNVQVGGGEATIARNGNIFSDIWKTFTSAGETTNIRDAIATRVSKEGDTMTGKLTLSAGNDALVLTAGEGASSHIRSDVGGTNNWYIGKGSGDNGLGFYSYITQGGVYITNNGEIALSPQGQGTFNFNRDRLHINGTQWTAHQGGGWENQWNQEAPIFIDFGNVGNDSYYPIIKGKSGITNEGYISGVDFGMRRITNTWAQGIIRVGNQENGSDPQAIYEFHHNGVLYVPNMVKAGARLSAGGGDPVWQGACVVIGDNDTGLVHGGDGRINMVANGMHIASWSSAYHLHEGLWDTTGALWTEQGRAIISFGHLVQQSDAYSTFVRDVYVRSDIRVKKDLVKFENASEKLSKINGYTYMQKRGLDEEGNQKWEPNAGLIAQEVQAILPELVEGDPDGERLLRLNYNGVIGLNTAAINEHTAEIAELKSEIEELKKIVKSLLK</sequence>
<name>FIB37_BPAR1</name>
<reference key="1">
    <citation type="journal article" date="2000" name="J. Bacteriol.">
        <title>Characterization of the distal tail fiber locus and determination of the receptor for phage AR1, which specifically infects Escherichia coli O157:H7.</title>
        <authorList>
            <person name="Yu S.L."/>
            <person name="Ko K.L."/>
            <person name="Chen C.S."/>
            <person name="Chang Y.C."/>
            <person name="Syu W.J."/>
        </authorList>
    </citation>
    <scope>NUCLEOTIDE SEQUENCE [GENOMIC DNA]</scope>
</reference>
<keyword id="KW-0945">Host-virus interaction</keyword>
<keyword id="KW-1161">Viral attachment to host cell</keyword>
<keyword id="KW-1230">Viral tail fiber protein</keyword>
<keyword id="KW-1227">Viral tail protein</keyword>
<keyword id="KW-0946">Virion</keyword>
<keyword id="KW-1160">Virus entry into host cell</keyword>
<accession>Q9G0B5</accession>
<proteinExistence type="inferred from homology"/>
<dbReference type="EMBL" id="AF208841">
    <property type="protein sequence ID" value="AAG29754.1"/>
    <property type="molecule type" value="Genomic_DNA"/>
</dbReference>
<dbReference type="SMR" id="Q9G0B5"/>
<dbReference type="GO" id="GO:0098024">
    <property type="term" value="C:virus tail, fiber"/>
    <property type="evidence" value="ECO:0007669"/>
    <property type="project" value="UniProtKB-KW"/>
</dbReference>
<dbReference type="GO" id="GO:0046718">
    <property type="term" value="P:symbiont entry into host cell"/>
    <property type="evidence" value="ECO:0007669"/>
    <property type="project" value="UniProtKB-KW"/>
</dbReference>
<dbReference type="GO" id="GO:0019062">
    <property type="term" value="P:virion attachment to host cell"/>
    <property type="evidence" value="ECO:0007669"/>
    <property type="project" value="UniProtKB-KW"/>
</dbReference>
<dbReference type="Gene3D" id="6.20.80.10">
    <property type="match status" value="1"/>
</dbReference>
<dbReference type="InterPro" id="IPR048390">
    <property type="entry name" value="Gp34_trimer"/>
</dbReference>
<dbReference type="InterPro" id="IPR030392">
    <property type="entry name" value="S74_ICA"/>
</dbReference>
<dbReference type="Pfam" id="PF21446">
    <property type="entry name" value="Gp34_trimer"/>
    <property type="match status" value="1"/>
</dbReference>
<dbReference type="Pfam" id="PF13884">
    <property type="entry name" value="Peptidase_S74"/>
    <property type="match status" value="1"/>
</dbReference>
<dbReference type="PROSITE" id="PS51688">
    <property type="entry name" value="ICA"/>
    <property type="match status" value="1"/>
</dbReference>
<feature type="chain" id="PRO_0000165027" description="Long tail fiber protein Gp37">
    <location>
        <begin position="1"/>
        <end position="1103"/>
    </location>
</feature>
<feature type="chain" id="PRO_0000458675" description="Mature tail fiber protein Gp37" evidence="1">
    <location>
        <begin position="1"/>
        <end position="993"/>
    </location>
</feature>
<feature type="chain" id="PRO_0000458676" description="Intramolecular chaperone" evidence="1">
    <location>
        <begin position="994"/>
        <end position="1103"/>
    </location>
</feature>
<feature type="domain" description="Peptidase S74" evidence="4">
    <location>
        <begin position="993"/>
        <end position="1091"/>
    </location>
</feature>
<feature type="region of interest" description="Interaction with the receptor-recognizing protein gp38" evidence="1">
    <location>
        <begin position="988"/>
        <end position="991"/>
    </location>
</feature>
<feature type="site" description="Cleavage; by autolysis" evidence="2">
    <location>
        <begin position="993"/>
        <end position="994"/>
    </location>
</feature>
<evidence type="ECO:0000250" key="1">
    <source>
        <dbReference type="UniProtKB" id="M1EAS5"/>
    </source>
</evidence>
<evidence type="ECO:0000250" key="2">
    <source>
        <dbReference type="UniProtKB" id="P49714"/>
    </source>
</evidence>
<evidence type="ECO:0000250" key="3">
    <source>
        <dbReference type="UniProtKB" id="Q04830"/>
    </source>
</evidence>
<evidence type="ECO:0000255" key="4">
    <source>
        <dbReference type="PROSITE-ProRule" id="PRU01025"/>
    </source>
</evidence>
<evidence type="ECO:0000305" key="5"/>
<organism>
    <name type="scientific">Escherichia phage AR1</name>
    <name type="common">Bacteriophage AR1</name>
    <dbReference type="NCBI Taxonomy" id="66711"/>
    <lineage>
        <taxon>Viruses</taxon>
        <taxon>Duplodnaviria</taxon>
        <taxon>Heunggongvirae</taxon>
        <taxon>Uroviricota</taxon>
        <taxon>Caudoviricetes</taxon>
        <taxon>Straboviridae</taxon>
        <taxon>Tevenvirinae</taxon>
        <taxon>Tequatrovirus</taxon>
        <taxon>Tequatrovirus ar1</taxon>
    </lineage>
</organism>
<protein>
    <recommendedName>
        <fullName>Long tail fiber protein Gp37</fullName>
        <shortName>Protein Gp37</shortName>
    </recommendedName>
    <alternativeName>
        <fullName evidence="5">Gene product 37</fullName>
        <shortName evidence="5">gp37</shortName>
    </alternativeName>
    <alternativeName>
        <fullName evidence="5">Receptor-recognizing protein</fullName>
    </alternativeName>
    <component>
        <recommendedName>
            <fullName evidence="2">Mature tail fiber protein Gp37</fullName>
        </recommendedName>
    </component>
    <component>
        <recommendedName>
            <fullName evidence="3">Intramolecular chaperone</fullName>
        </recommendedName>
    </component>
</protein>
<gene>
    <name type="primary">37</name>
</gene>